<name>GPH_YERPE</name>
<evidence type="ECO:0000255" key="1">
    <source>
        <dbReference type="HAMAP-Rule" id="MF_00495"/>
    </source>
</evidence>
<evidence type="ECO:0000305" key="2"/>
<protein>
    <recommendedName>
        <fullName evidence="1">Phosphoglycolate phosphatase</fullName>
        <shortName evidence="1">PGP</shortName>
        <shortName evidence="1">PGPase</shortName>
        <ecNumber evidence="1">3.1.3.18</ecNumber>
    </recommendedName>
</protein>
<dbReference type="EC" id="3.1.3.18" evidence="1"/>
<dbReference type="EMBL" id="AL590842">
    <property type="protein sequence ID" value="CAL18842.1"/>
    <property type="molecule type" value="Genomic_DNA"/>
</dbReference>
<dbReference type="EMBL" id="AE009952">
    <property type="protein sequence ID" value="AAM87483.1"/>
    <property type="status" value="ALT_INIT"/>
    <property type="molecule type" value="Genomic_DNA"/>
</dbReference>
<dbReference type="EMBL" id="AE017042">
    <property type="protein sequence ID" value="AAS60436.1"/>
    <property type="status" value="ALT_INIT"/>
    <property type="molecule type" value="Genomic_DNA"/>
</dbReference>
<dbReference type="PIR" id="AI0019">
    <property type="entry name" value="AI0019"/>
</dbReference>
<dbReference type="RefSeq" id="WP_002208892.1">
    <property type="nucleotide sequence ID" value="NZ_WUCM01000004.1"/>
</dbReference>
<dbReference type="RefSeq" id="YP_002345242.1">
    <property type="nucleotide sequence ID" value="NC_003143.1"/>
</dbReference>
<dbReference type="SMR" id="Q8ZJF3"/>
<dbReference type="IntAct" id="Q8ZJF3">
    <property type="interactions" value="5"/>
</dbReference>
<dbReference type="STRING" id="214092.YPO0156"/>
<dbReference type="PaxDb" id="214092-YPO0156"/>
<dbReference type="EnsemblBacteria" id="AAS60436">
    <property type="protein sequence ID" value="AAS60436"/>
    <property type="gene ID" value="YP_0158"/>
</dbReference>
<dbReference type="KEGG" id="ype:YPO0156"/>
<dbReference type="KEGG" id="ypk:y3939"/>
<dbReference type="KEGG" id="ypm:YP_0158"/>
<dbReference type="PATRIC" id="fig|214092.21.peg.384"/>
<dbReference type="eggNOG" id="COG0546">
    <property type="taxonomic scope" value="Bacteria"/>
</dbReference>
<dbReference type="HOGENOM" id="CLU_045011_19_1_6"/>
<dbReference type="OrthoDB" id="9776368at2"/>
<dbReference type="UniPathway" id="UPA00865">
    <property type="reaction ID" value="UER00834"/>
</dbReference>
<dbReference type="Proteomes" id="UP000000815">
    <property type="component" value="Chromosome"/>
</dbReference>
<dbReference type="Proteomes" id="UP000001019">
    <property type="component" value="Chromosome"/>
</dbReference>
<dbReference type="Proteomes" id="UP000002490">
    <property type="component" value="Chromosome"/>
</dbReference>
<dbReference type="GO" id="GO:0005829">
    <property type="term" value="C:cytosol"/>
    <property type="evidence" value="ECO:0000318"/>
    <property type="project" value="GO_Central"/>
</dbReference>
<dbReference type="GO" id="GO:0046872">
    <property type="term" value="F:metal ion binding"/>
    <property type="evidence" value="ECO:0007669"/>
    <property type="project" value="UniProtKB-KW"/>
</dbReference>
<dbReference type="GO" id="GO:0008967">
    <property type="term" value="F:phosphoglycolate phosphatase activity"/>
    <property type="evidence" value="ECO:0000318"/>
    <property type="project" value="GO_Central"/>
</dbReference>
<dbReference type="GO" id="GO:0005975">
    <property type="term" value="P:carbohydrate metabolic process"/>
    <property type="evidence" value="ECO:0007669"/>
    <property type="project" value="InterPro"/>
</dbReference>
<dbReference type="GO" id="GO:0006281">
    <property type="term" value="P:DNA repair"/>
    <property type="evidence" value="ECO:0000318"/>
    <property type="project" value="GO_Central"/>
</dbReference>
<dbReference type="GO" id="GO:0046295">
    <property type="term" value="P:glycolate biosynthetic process"/>
    <property type="evidence" value="ECO:0007669"/>
    <property type="project" value="UniProtKB-UniRule"/>
</dbReference>
<dbReference type="CDD" id="cd16417">
    <property type="entry name" value="HAD_PGPase"/>
    <property type="match status" value="1"/>
</dbReference>
<dbReference type="FunFam" id="3.40.50.1000:FF:000022">
    <property type="entry name" value="Phosphoglycolate phosphatase"/>
    <property type="match status" value="1"/>
</dbReference>
<dbReference type="Gene3D" id="3.40.50.1000">
    <property type="entry name" value="HAD superfamily/HAD-like"/>
    <property type="match status" value="1"/>
</dbReference>
<dbReference type="Gene3D" id="1.10.150.240">
    <property type="entry name" value="Putative phosphatase, domain 2"/>
    <property type="match status" value="1"/>
</dbReference>
<dbReference type="HAMAP" id="MF_00495">
    <property type="entry name" value="GPH_hydrolase_bact"/>
    <property type="match status" value="1"/>
</dbReference>
<dbReference type="InterPro" id="IPR050155">
    <property type="entry name" value="HAD-like_hydrolase_sf"/>
</dbReference>
<dbReference type="InterPro" id="IPR036412">
    <property type="entry name" value="HAD-like_sf"/>
</dbReference>
<dbReference type="InterPro" id="IPR006439">
    <property type="entry name" value="HAD-SF_hydro_IA"/>
</dbReference>
<dbReference type="InterPro" id="IPR041492">
    <property type="entry name" value="HAD_2"/>
</dbReference>
<dbReference type="InterPro" id="IPR023214">
    <property type="entry name" value="HAD_sf"/>
</dbReference>
<dbReference type="InterPro" id="IPR023198">
    <property type="entry name" value="PGP-like_dom2"/>
</dbReference>
<dbReference type="InterPro" id="IPR037512">
    <property type="entry name" value="PGPase_prok"/>
</dbReference>
<dbReference type="NCBIfam" id="TIGR01549">
    <property type="entry name" value="HAD-SF-IA-v1"/>
    <property type="match status" value="1"/>
</dbReference>
<dbReference type="NCBIfam" id="TIGR01509">
    <property type="entry name" value="HAD-SF-IA-v3"/>
    <property type="match status" value="1"/>
</dbReference>
<dbReference type="NCBIfam" id="TIGR01449">
    <property type="entry name" value="PGP_bact"/>
    <property type="match status" value="1"/>
</dbReference>
<dbReference type="NCBIfam" id="NF009695">
    <property type="entry name" value="PRK13222.1-2"/>
    <property type="match status" value="1"/>
</dbReference>
<dbReference type="NCBIfam" id="NF009697">
    <property type="entry name" value="PRK13222.1-4"/>
    <property type="match status" value="1"/>
</dbReference>
<dbReference type="PANTHER" id="PTHR43434">
    <property type="entry name" value="PHOSPHOGLYCOLATE PHOSPHATASE"/>
    <property type="match status" value="1"/>
</dbReference>
<dbReference type="PANTHER" id="PTHR43434:SF1">
    <property type="entry name" value="PHOSPHOGLYCOLATE PHOSPHATASE"/>
    <property type="match status" value="1"/>
</dbReference>
<dbReference type="Pfam" id="PF13419">
    <property type="entry name" value="HAD_2"/>
    <property type="match status" value="1"/>
</dbReference>
<dbReference type="PRINTS" id="PR00413">
    <property type="entry name" value="HADHALOGNASE"/>
</dbReference>
<dbReference type="SFLD" id="SFLDG01135">
    <property type="entry name" value="C1.5.6:_HAD__Beta-PGM__Phospha"/>
    <property type="match status" value="1"/>
</dbReference>
<dbReference type="SFLD" id="SFLDS00003">
    <property type="entry name" value="Haloacid_Dehalogenase"/>
    <property type="match status" value="1"/>
</dbReference>
<dbReference type="SUPFAM" id="SSF56784">
    <property type="entry name" value="HAD-like"/>
    <property type="match status" value="1"/>
</dbReference>
<reference key="1">
    <citation type="journal article" date="2001" name="Nature">
        <title>Genome sequence of Yersinia pestis, the causative agent of plague.</title>
        <authorList>
            <person name="Parkhill J."/>
            <person name="Wren B.W."/>
            <person name="Thomson N.R."/>
            <person name="Titball R.W."/>
            <person name="Holden M.T.G."/>
            <person name="Prentice M.B."/>
            <person name="Sebaihia M."/>
            <person name="James K.D."/>
            <person name="Churcher C.M."/>
            <person name="Mungall K.L."/>
            <person name="Baker S."/>
            <person name="Basham D."/>
            <person name="Bentley S.D."/>
            <person name="Brooks K."/>
            <person name="Cerdeno-Tarraga A.-M."/>
            <person name="Chillingworth T."/>
            <person name="Cronin A."/>
            <person name="Davies R.M."/>
            <person name="Davis P."/>
            <person name="Dougan G."/>
            <person name="Feltwell T."/>
            <person name="Hamlin N."/>
            <person name="Holroyd S."/>
            <person name="Jagels K."/>
            <person name="Karlyshev A.V."/>
            <person name="Leather S."/>
            <person name="Moule S."/>
            <person name="Oyston P.C.F."/>
            <person name="Quail M.A."/>
            <person name="Rutherford K.M."/>
            <person name="Simmonds M."/>
            <person name="Skelton J."/>
            <person name="Stevens K."/>
            <person name="Whitehead S."/>
            <person name="Barrell B.G."/>
        </authorList>
    </citation>
    <scope>NUCLEOTIDE SEQUENCE [LARGE SCALE GENOMIC DNA]</scope>
    <source>
        <strain>CO-92 / Biovar Orientalis</strain>
    </source>
</reference>
<reference key="2">
    <citation type="journal article" date="2002" name="J. Bacteriol.">
        <title>Genome sequence of Yersinia pestis KIM.</title>
        <authorList>
            <person name="Deng W."/>
            <person name="Burland V."/>
            <person name="Plunkett G. III"/>
            <person name="Boutin A."/>
            <person name="Mayhew G.F."/>
            <person name="Liss P."/>
            <person name="Perna N.T."/>
            <person name="Rose D.J."/>
            <person name="Mau B."/>
            <person name="Zhou S."/>
            <person name="Schwartz D.C."/>
            <person name="Fetherston J.D."/>
            <person name="Lindler L.E."/>
            <person name="Brubaker R.R."/>
            <person name="Plano G.V."/>
            <person name="Straley S.C."/>
            <person name="McDonough K.A."/>
            <person name="Nilles M.L."/>
            <person name="Matson J.S."/>
            <person name="Blattner F.R."/>
            <person name="Perry R.D."/>
        </authorList>
    </citation>
    <scope>NUCLEOTIDE SEQUENCE [LARGE SCALE GENOMIC DNA]</scope>
    <source>
        <strain>KIM10+ / Biovar Mediaevalis</strain>
    </source>
</reference>
<reference key="3">
    <citation type="journal article" date="2004" name="DNA Res.">
        <title>Complete genome sequence of Yersinia pestis strain 91001, an isolate avirulent to humans.</title>
        <authorList>
            <person name="Song Y."/>
            <person name="Tong Z."/>
            <person name="Wang J."/>
            <person name="Wang L."/>
            <person name="Guo Z."/>
            <person name="Han Y."/>
            <person name="Zhang J."/>
            <person name="Pei D."/>
            <person name="Zhou D."/>
            <person name="Qin H."/>
            <person name="Pang X."/>
            <person name="Han Y."/>
            <person name="Zhai J."/>
            <person name="Li M."/>
            <person name="Cui B."/>
            <person name="Qi Z."/>
            <person name="Jin L."/>
            <person name="Dai R."/>
            <person name="Chen F."/>
            <person name="Li S."/>
            <person name="Ye C."/>
            <person name="Du Z."/>
            <person name="Lin W."/>
            <person name="Wang J."/>
            <person name="Yu J."/>
            <person name="Yang H."/>
            <person name="Wang J."/>
            <person name="Huang P."/>
            <person name="Yang R."/>
        </authorList>
    </citation>
    <scope>NUCLEOTIDE SEQUENCE [LARGE SCALE GENOMIC DNA]</scope>
    <source>
        <strain>91001 / Biovar Mediaevalis</strain>
    </source>
</reference>
<sequence>MVKFKAIRGVAFDLDGTLVDSAPGLARAIDMALAHQGLPAAGEALVSTWIGNGADVLVERALHWAGREHNAQLVAQTRELFDHYYAKTVEQGSQLFPQVKATLAQLAANGLPIGLITNKPTPFVAPLLTSLGISDYFSVIIGGDDVVVKKPHPAPLYLLLGKLGLHAREMLFVGDSRNDIMAAQAAGCPCIGLTYGYNYGEAIATSHPDCVLAHFADLLPAIGLPSLKDQEV</sequence>
<organism>
    <name type="scientific">Yersinia pestis</name>
    <dbReference type="NCBI Taxonomy" id="632"/>
    <lineage>
        <taxon>Bacteria</taxon>
        <taxon>Pseudomonadati</taxon>
        <taxon>Pseudomonadota</taxon>
        <taxon>Gammaproteobacteria</taxon>
        <taxon>Enterobacterales</taxon>
        <taxon>Yersiniaceae</taxon>
        <taxon>Yersinia</taxon>
    </lineage>
</organism>
<proteinExistence type="inferred from homology"/>
<keyword id="KW-0119">Carbohydrate metabolism</keyword>
<keyword id="KW-0868">Chloride</keyword>
<keyword id="KW-0378">Hydrolase</keyword>
<keyword id="KW-0460">Magnesium</keyword>
<keyword id="KW-0479">Metal-binding</keyword>
<keyword id="KW-1185">Reference proteome</keyword>
<gene>
    <name evidence="1" type="primary">gph</name>
    <name type="ordered locus">YPO0156</name>
    <name type="ordered locus">y3939</name>
    <name type="ordered locus">YP_0158</name>
</gene>
<accession>Q8ZJF3</accession>
<accession>Q0WKE6</accession>
<comment type="function">
    <text evidence="1">Specifically catalyzes the dephosphorylation of 2-phosphoglycolate. Is involved in the dissimilation of the intracellular 2-phosphoglycolate formed during the DNA repair of 3'-phosphoglycolate ends, a major class of DNA lesions induced by oxidative stress.</text>
</comment>
<comment type="catalytic activity">
    <reaction evidence="1">
        <text>2-phosphoglycolate + H2O = glycolate + phosphate</text>
        <dbReference type="Rhea" id="RHEA:14369"/>
        <dbReference type="ChEBI" id="CHEBI:15377"/>
        <dbReference type="ChEBI" id="CHEBI:29805"/>
        <dbReference type="ChEBI" id="CHEBI:43474"/>
        <dbReference type="ChEBI" id="CHEBI:58033"/>
        <dbReference type="EC" id="3.1.3.18"/>
    </reaction>
</comment>
<comment type="cofactor">
    <cofactor evidence="1">
        <name>Mg(2+)</name>
        <dbReference type="ChEBI" id="CHEBI:18420"/>
    </cofactor>
</comment>
<comment type="cofactor">
    <cofactor evidence="1">
        <name>chloride</name>
        <dbReference type="ChEBI" id="CHEBI:17996"/>
    </cofactor>
</comment>
<comment type="pathway">
    <text evidence="1">Organic acid metabolism; glycolate biosynthesis; glycolate from 2-phosphoglycolate: step 1/1.</text>
</comment>
<comment type="subunit">
    <text evidence="1">Monomer.</text>
</comment>
<comment type="similarity">
    <text evidence="1">Belongs to the HAD-like hydrolase superfamily. CbbY/CbbZ/Gph/YieH family.</text>
</comment>
<comment type="sequence caution" evidence="2">
    <conflict type="erroneous initiation">
        <sequence resource="EMBL-CDS" id="AAM87483"/>
    </conflict>
    <text>Extended N-terminus.</text>
</comment>
<comment type="sequence caution" evidence="2">
    <conflict type="erroneous initiation">
        <sequence resource="EMBL-CDS" id="AAS60436"/>
    </conflict>
    <text>Extended N-terminus.</text>
</comment>
<feature type="chain" id="PRO_0000108050" description="Phosphoglycolate phosphatase">
    <location>
        <begin position="1"/>
        <end position="232"/>
    </location>
</feature>
<feature type="active site" description="Nucleophile" evidence="1">
    <location>
        <position position="13"/>
    </location>
</feature>
<feature type="binding site" evidence="1">
    <location>
        <position position="13"/>
    </location>
    <ligand>
        <name>Mg(2+)</name>
        <dbReference type="ChEBI" id="CHEBI:18420"/>
    </ligand>
</feature>
<feature type="binding site" evidence="1">
    <location>
        <position position="15"/>
    </location>
    <ligand>
        <name>Mg(2+)</name>
        <dbReference type="ChEBI" id="CHEBI:18420"/>
    </ligand>
</feature>
<feature type="binding site" evidence="1">
    <location>
        <position position="175"/>
    </location>
    <ligand>
        <name>Mg(2+)</name>
        <dbReference type="ChEBI" id="CHEBI:18420"/>
    </ligand>
</feature>